<comment type="function">
    <text evidence="4 5 6">Brassicaceae-specific phytocytokine (plant endogenous peptide released into the apoplast) perceived by MIK2 in a BAK1/SERK3 and SERK4 coreceptors-dependent manner, that modulates various physiological and antimicrobial processes including growth prevention and reactive oxygen species (ROS) response regulation (PubMed:31001913, PubMed:33514716, PubMed:34535661). Inhibits root growth (PubMed:34535661). Prevents general growth and development (PubMed:31001913). Exhibits antibacterial effects against Pseudomonas syringae pv. tomato DC3000, Ralstonia solanacearum, Bacillus subtilis and Agrobacterium tumefaciens, thus being an antimicrobial peptide (AMP) (PubMed:31001913).</text>
</comment>
<comment type="subunit">
    <text evidence="1">Interacts with MIK2 (via extracellular leucine-rich repeat domain); this interaction triggers the formation of complex between MIK2 and the BAK1/SERK3 and SERK4 coreceptors, and subsequent BAK1 activation by phosphorylation.</text>
</comment>
<comment type="subcellular location">
    <subcellularLocation>
        <location evidence="1">Cell membrane</location>
    </subcellularLocation>
    <subcellularLocation>
        <location evidence="1">Secreted</location>
        <location evidence="1">Extracellular space</location>
        <location evidence="1">Apoplast</location>
    </subcellularLocation>
    <text evidence="1">The precursor of SCOOP4, PROSCOOP4, accumulates at the plasma membrane and is proteolytically cleaved to release the SCOOP4 in the apoplasm.</text>
</comment>
<comment type="tissue specificity">
    <text evidence="4 6">Mostly expressed in leaves and seedlings shoots, and, to a lower extent, in roots, stems, siliques, seeds and flowers.</text>
</comment>
<comment type="induction">
    <text evidence="4 7">Accumulates upon infection by generalist herbivores such as Spodoptera littoralis (PubMed:35401621). Induced by wounding (PubMed:35401621). Triggered by salicylic acid (SA) (PubMed:31001913).</text>
</comment>
<comment type="disruption phenotype">
    <text evidence="4">Increased growth and fresh weight.</text>
</comment>
<comment type="similarity">
    <text evidence="11">Belongs to the serine rich endogenous peptide (SCOOP) phytocytokine family.</text>
</comment>
<accession>Q570K8</accession>
<protein>
    <recommendedName>
        <fullName evidence="9 10">Serine rich endogenous peptide 4</fullName>
        <shortName evidence="9 10">AtSCOOP4</shortName>
    </recommendedName>
    <alternativeName>
        <fullName evidence="9 10">Phytocytokine SCOOP4</fullName>
    </alternativeName>
    <alternativeName>
        <fullName evidence="9 10">Precursor of serine rich endogenous peptide phytocytokine 4</fullName>
    </alternativeName>
    <alternativeName>
        <fullName evidence="8">Secreted transmembrane peptide 10</fullName>
    </alternativeName>
</protein>
<name>SCOP4_ARATH</name>
<keyword id="KW-0052">Apoplast</keyword>
<keyword id="KW-1003">Cell membrane</keyword>
<keyword id="KW-0165">Cleavage on pair of basic residues</keyword>
<keyword id="KW-0472">Membrane</keyword>
<keyword id="KW-1185">Reference proteome</keyword>
<keyword id="KW-0964">Secreted</keyword>
<keyword id="KW-0732">Signal</keyword>
<organism>
    <name type="scientific">Arabidopsis thaliana</name>
    <name type="common">Mouse-ear cress</name>
    <dbReference type="NCBI Taxonomy" id="3702"/>
    <lineage>
        <taxon>Eukaryota</taxon>
        <taxon>Viridiplantae</taxon>
        <taxon>Streptophyta</taxon>
        <taxon>Embryophyta</taxon>
        <taxon>Tracheophyta</taxon>
        <taxon>Spermatophyta</taxon>
        <taxon>Magnoliopsida</taxon>
        <taxon>eudicotyledons</taxon>
        <taxon>Gunneridae</taxon>
        <taxon>Pentapetalae</taxon>
        <taxon>rosids</taxon>
        <taxon>malvids</taxon>
        <taxon>Brassicales</taxon>
        <taxon>Brassicaceae</taxon>
        <taxon>Camelineae</taxon>
        <taxon>Arabidopsis</taxon>
    </lineage>
</organism>
<dbReference type="EMBL" id="AB024024">
    <property type="status" value="NOT_ANNOTATED_CDS"/>
    <property type="molecule type" value="Genomic_DNA"/>
</dbReference>
<dbReference type="EMBL" id="CP002688">
    <property type="protein sequence ID" value="AED95126.1"/>
    <property type="molecule type" value="Genomic_DNA"/>
</dbReference>
<dbReference type="EMBL" id="AK220700">
    <property type="protein sequence ID" value="BAD93793.1"/>
    <property type="molecule type" value="mRNA"/>
</dbReference>
<dbReference type="RefSeq" id="NP_001078710.1">
    <property type="nucleotide sequence ID" value="NM_001085241.2"/>
</dbReference>
<dbReference type="FunCoup" id="Q570K8">
    <property type="interactions" value="9"/>
</dbReference>
<dbReference type="STRING" id="3702.Q570K8"/>
<dbReference type="PaxDb" id="3702-AT5G44568.1"/>
<dbReference type="EnsemblPlants" id="AT5G44568.1">
    <property type="protein sequence ID" value="AT5G44568.1"/>
    <property type="gene ID" value="AT5G44568"/>
</dbReference>
<dbReference type="GeneID" id="5008297"/>
<dbReference type="Gramene" id="AT5G44568.1">
    <property type="protein sequence ID" value="AT5G44568.1"/>
    <property type="gene ID" value="AT5G44568"/>
</dbReference>
<dbReference type="KEGG" id="ath:AT5G44568"/>
<dbReference type="Araport" id="AT5G44568"/>
<dbReference type="TAIR" id="AT5G44568">
    <property type="gene designation" value="STMP10"/>
</dbReference>
<dbReference type="HOGENOM" id="CLU_200719_0_0_1"/>
<dbReference type="InParanoid" id="Q570K8"/>
<dbReference type="PRO" id="PR:Q570K8"/>
<dbReference type="Proteomes" id="UP000006548">
    <property type="component" value="Chromosome 5"/>
</dbReference>
<dbReference type="ExpressionAtlas" id="Q570K8">
    <property type="expression patterns" value="baseline and differential"/>
</dbReference>
<dbReference type="GO" id="GO:0048046">
    <property type="term" value="C:apoplast"/>
    <property type="evidence" value="ECO:0000314"/>
    <property type="project" value="UniProtKB"/>
</dbReference>
<dbReference type="GO" id="GO:0005886">
    <property type="term" value="C:plasma membrane"/>
    <property type="evidence" value="ECO:0000314"/>
    <property type="project" value="TAIR"/>
</dbReference>
<dbReference type="GO" id="GO:0030275">
    <property type="term" value="F:LRR domain binding"/>
    <property type="evidence" value="ECO:0000250"/>
    <property type="project" value="UniProtKB"/>
</dbReference>
<dbReference type="GO" id="GO:0033612">
    <property type="term" value="F:receptor serine/threonine kinase binding"/>
    <property type="evidence" value="ECO:0000250"/>
    <property type="project" value="UniProtKB"/>
</dbReference>
<dbReference type="GO" id="GO:0006952">
    <property type="term" value="P:defense response"/>
    <property type="evidence" value="ECO:0000314"/>
    <property type="project" value="TAIR"/>
</dbReference>
<dbReference type="GO" id="GO:0042742">
    <property type="term" value="P:defense response to bacterium"/>
    <property type="evidence" value="ECO:0000314"/>
    <property type="project" value="UniProtKB"/>
</dbReference>
<dbReference type="GO" id="GO:0080027">
    <property type="term" value="P:response to herbivore"/>
    <property type="evidence" value="ECO:0000270"/>
    <property type="project" value="UniProtKB"/>
</dbReference>
<dbReference type="GO" id="GO:0009625">
    <property type="term" value="P:response to insect"/>
    <property type="evidence" value="ECO:0000270"/>
    <property type="project" value="UniProtKB"/>
</dbReference>
<dbReference type="GO" id="GO:0009751">
    <property type="term" value="P:response to salicylic acid"/>
    <property type="evidence" value="ECO:0000270"/>
    <property type="project" value="UniProtKB"/>
</dbReference>
<dbReference type="GO" id="GO:0009611">
    <property type="term" value="P:response to wounding"/>
    <property type="evidence" value="ECO:0000270"/>
    <property type="project" value="UniProtKB"/>
</dbReference>
<gene>
    <name evidence="9 10" type="primary">PROSCOOP4</name>
    <name evidence="9 10" type="synonym">SCOOP4</name>
    <name evidence="8" type="synonym">STMP10</name>
    <name evidence="13" type="ordered locus">At5g44568</name>
    <name evidence="14" type="ORF">K15C23</name>
</gene>
<proteinExistence type="evidence at transcript level"/>
<feature type="signal peptide" evidence="2">
    <location>
        <begin position="1"/>
        <end position="31"/>
    </location>
</feature>
<feature type="propeptide" id="PRO_0000457220" description="Removed in mature form" evidence="1">
    <location>
        <begin position="32"/>
        <end status="unknown"/>
    </location>
</feature>
<feature type="peptide" id="PRO_0000457221" description="Serine rich endogenous peptide 4" evidence="1">
    <location>
        <begin status="unknown"/>
        <end position="75"/>
    </location>
</feature>
<feature type="region of interest" description="Disordered" evidence="3">
    <location>
        <begin position="51"/>
        <end position="75"/>
    </location>
</feature>
<feature type="short sequence motif" description="SCOOP motif" evidence="12">
    <location>
        <begin position="61"/>
        <end position="75"/>
    </location>
</feature>
<feature type="short sequence motif" description="SxS motif essential for MIK2 binding" evidence="1">
    <location>
        <begin position="67"/>
        <end position="69"/>
    </location>
</feature>
<evidence type="ECO:0000250" key="1">
    <source>
        <dbReference type="UniProtKB" id="B3H7I1"/>
    </source>
</evidence>
<evidence type="ECO:0000255" key="2"/>
<evidence type="ECO:0000256" key="3">
    <source>
        <dbReference type="SAM" id="MobiDB-lite"/>
    </source>
</evidence>
<evidence type="ECO:0000269" key="4">
    <source>
    </source>
</evidence>
<evidence type="ECO:0000269" key="5">
    <source>
    </source>
</evidence>
<evidence type="ECO:0000269" key="6">
    <source>
    </source>
</evidence>
<evidence type="ECO:0000269" key="7">
    <source>
    </source>
</evidence>
<evidence type="ECO:0000303" key="8">
    <source>
    </source>
</evidence>
<evidence type="ECO:0000303" key="9">
    <source>
    </source>
</evidence>
<evidence type="ECO:0000303" key="10">
    <source>
    </source>
</evidence>
<evidence type="ECO:0000305" key="11"/>
<evidence type="ECO:0000305" key="12">
    <source>
    </source>
</evidence>
<evidence type="ECO:0000312" key="13">
    <source>
        <dbReference type="Araport" id="AT5G44568"/>
    </source>
</evidence>
<evidence type="ECO:0000312" key="14">
    <source>
        <dbReference type="EMBL" id="AB024024"/>
    </source>
</evidence>
<sequence length="75" mass="8143">MATKTSNLGHLLLSLFILLLFILSQVGVAQAKRLQQRNKLRLDCVPLPPPPPPLRGIVKPPIASFHSASPKDKGP</sequence>
<reference key="1">
    <citation type="submission" date="1999-02" db="EMBL/GenBank/DDBJ databases">
        <title>Structural analysis of Arabidopsis thaliana chromosome 5. XI.</title>
        <authorList>
            <person name="Kaneko T."/>
            <person name="Katoh T."/>
            <person name="Asamizu E."/>
            <person name="Sato S."/>
            <person name="Nakamura Y."/>
            <person name="Kotani H."/>
            <person name="Tabata S."/>
        </authorList>
    </citation>
    <scope>NUCLEOTIDE SEQUENCE [LARGE SCALE GENOMIC DNA]</scope>
    <source>
        <strain>cv. Columbia</strain>
    </source>
</reference>
<reference key="2">
    <citation type="journal article" date="2017" name="Plant J.">
        <title>Araport11: a complete reannotation of the Arabidopsis thaliana reference genome.</title>
        <authorList>
            <person name="Cheng C.Y."/>
            <person name="Krishnakumar V."/>
            <person name="Chan A.P."/>
            <person name="Thibaud-Nissen F."/>
            <person name="Schobel S."/>
            <person name="Town C.D."/>
        </authorList>
    </citation>
    <scope>GENOME REANNOTATION</scope>
    <source>
        <strain>cv. Columbia</strain>
    </source>
</reference>
<reference key="3">
    <citation type="submission" date="2005-03" db="EMBL/GenBank/DDBJ databases">
        <title>Large-scale analysis of RIKEN Arabidopsis full-length (RAFL) cDNAs.</title>
        <authorList>
            <person name="Totoki Y."/>
            <person name="Seki M."/>
            <person name="Ishida J."/>
            <person name="Nakajima M."/>
            <person name="Enju A."/>
            <person name="Kamiya A."/>
            <person name="Narusaka M."/>
            <person name="Shin-i T."/>
            <person name="Nakagawa M."/>
            <person name="Sakamoto N."/>
            <person name="Oishi K."/>
            <person name="Kohara Y."/>
            <person name="Kobayashi M."/>
            <person name="Toyoda A."/>
            <person name="Sakaki Y."/>
            <person name="Sakurai T."/>
            <person name="Iida K."/>
            <person name="Akiyama K."/>
            <person name="Satou M."/>
            <person name="Toyoda T."/>
            <person name="Konagaya A."/>
            <person name="Carninci P."/>
            <person name="Kawai J."/>
            <person name="Hayashizaki Y."/>
            <person name="Shinozaki K."/>
        </authorList>
    </citation>
    <scope>NUCLEOTIDE SEQUENCE [LARGE SCALE MRNA]</scope>
    <source>
        <strain>cv. Columbia</strain>
    </source>
</reference>
<reference key="4">
    <citation type="journal article" date="2019" name="J. Exp. Bot.">
        <title>The SCOOP12 peptide regulates defense response and root elongation in Arabidopsis thaliana.</title>
        <authorList>
            <person name="Gully K."/>
            <person name="Pelletier S."/>
            <person name="Guillou M.-C."/>
            <person name="Ferrand M."/>
            <person name="Aligon S."/>
            <person name="Pokotylo I."/>
            <person name="Perrin A."/>
            <person name="Vergne E."/>
            <person name="Fagard M."/>
            <person name="Ruelland E."/>
            <person name="Grappin P."/>
            <person name="Bucher E."/>
            <person name="Renou J.-P."/>
            <person name="Aubourg S."/>
        </authorList>
    </citation>
    <scope>GENE FAMILY</scope>
    <source>
        <strain>cv. Columbia</strain>
        <strain>cv. Wassilewskija</strain>
    </source>
</reference>
<reference key="5">
    <citation type="journal article" date="2020" name="J. Integr. Plant Biol.">
        <title>The Brassicaceae-specific secreted peptides, STMPs, function in plant growth and pathogen defense.</title>
        <authorList>
            <person name="Yu Z."/>
            <person name="Xu Y."/>
            <person name="Zhu L."/>
            <person name="Zhang L."/>
            <person name="Liu L."/>
            <person name="Zhang D."/>
            <person name="Li D."/>
            <person name="Wu C."/>
            <person name="Huang J."/>
            <person name="Yang G."/>
            <person name="Yan K."/>
            <person name="Zhang S."/>
            <person name="Zheng C."/>
        </authorList>
    </citation>
    <scope>FUNCTION</scope>
    <scope>DISRUPTION PHENOTYPE</scope>
    <scope>SUBCELLULAR LOCATION</scope>
    <scope>TISSUE SPECIFICITY</scope>
    <scope>INDUCTION BY SALICYLIC ACID</scope>
    <scope>GENE FAMILY</scope>
    <scope>NOMENCLATURE</scope>
    <source>
        <strain>cv. Columbia</strain>
    </source>
</reference>
<reference key="6">
    <citation type="journal article" date="2021" name="Nat. Commun.">
        <title>Perception of a divergent family of phytocytokines by the Arabidopsis receptor kinase MIK2.</title>
        <authorList>
            <person name="Rhodes J."/>
            <person name="Yang H."/>
            <person name="Moussu S."/>
            <person name="Boutrot F."/>
            <person name="Santiago J."/>
            <person name="Zipfel C."/>
        </authorList>
    </citation>
    <scope>FUNCTION</scope>
    <scope>GENE FAMILY</scope>
    <source>
        <strain>cv. Columbia</strain>
        <strain>cv. Wassilewskija-2</strain>
    </source>
</reference>
<reference key="7">
    <citation type="journal article" date="2021" name="Nat. Commun.">
        <title>The Arabidopsis MIK2 receptor elicits immunity by sensing a conserved signature from phytocytokines and microbes.</title>
        <authorList>
            <person name="Hou S."/>
            <person name="Liu D."/>
            <person name="Huang S."/>
            <person name="Luo D."/>
            <person name="Liu Z."/>
            <person name="Xiang Q."/>
            <person name="Wang P."/>
            <person name="Mu R."/>
            <person name="Han Z."/>
            <person name="Chen S."/>
            <person name="Chai J."/>
            <person name="Shan L."/>
            <person name="He P."/>
        </authorList>
    </citation>
    <scope>FUNCTION</scope>
    <scope>TISSUE SPECIFICITY</scope>
    <scope>GENE FAMILY</scope>
    <scope>NOMENCLATURE</scope>
    <source>
        <strain>cv. Columbia</strain>
    </source>
</reference>
<reference key="8">
    <citation type="journal article" date="2022" name="Front. Plant Sci.">
        <title>The MIK2/SCOOP signaling system contributes to Arabidopsis resistance against herbivory by modulating jasmonate and indole glucosinolate biosynthesis.</title>
        <authorList>
            <person name="Stahl E."/>
            <person name="Fernandez Martin A."/>
            <person name="Glauser G."/>
            <person name="Guillou M.-C."/>
            <person name="Aubourg S."/>
            <person name="Renou J.-P."/>
            <person name="Reymond P."/>
        </authorList>
    </citation>
    <scope>INDUCTION BY INSECT HERBIVORY AND WOUNDING</scope>
    <source>
        <strain>cv. Columbia</strain>
        <strain>cv. Wassilewskija</strain>
    </source>
</reference>